<dbReference type="EC" id="7.4.2.8" evidence="1"/>
<dbReference type="EMBL" id="CP000030">
    <property type="protein sequence ID" value="AAV86971.1"/>
    <property type="status" value="ALT_INIT"/>
    <property type="molecule type" value="Genomic_DNA"/>
</dbReference>
<dbReference type="RefSeq" id="WP_011114592.1">
    <property type="nucleotide sequence ID" value="NC_004842.2"/>
</dbReference>
<dbReference type="SMR" id="Q5P9Q9"/>
<dbReference type="KEGG" id="ama:AM1120"/>
<dbReference type="HOGENOM" id="CLU_005314_3_0_5"/>
<dbReference type="GO" id="GO:0031522">
    <property type="term" value="C:cell envelope Sec protein transport complex"/>
    <property type="evidence" value="ECO:0007669"/>
    <property type="project" value="TreeGrafter"/>
</dbReference>
<dbReference type="GO" id="GO:0005829">
    <property type="term" value="C:cytosol"/>
    <property type="evidence" value="ECO:0007669"/>
    <property type="project" value="TreeGrafter"/>
</dbReference>
<dbReference type="GO" id="GO:0005886">
    <property type="term" value="C:plasma membrane"/>
    <property type="evidence" value="ECO:0007669"/>
    <property type="project" value="UniProtKB-SubCell"/>
</dbReference>
<dbReference type="GO" id="GO:0005524">
    <property type="term" value="F:ATP binding"/>
    <property type="evidence" value="ECO:0007669"/>
    <property type="project" value="UniProtKB-UniRule"/>
</dbReference>
<dbReference type="GO" id="GO:0046872">
    <property type="term" value="F:metal ion binding"/>
    <property type="evidence" value="ECO:0007669"/>
    <property type="project" value="UniProtKB-KW"/>
</dbReference>
<dbReference type="GO" id="GO:0008564">
    <property type="term" value="F:protein-exporting ATPase activity"/>
    <property type="evidence" value="ECO:0007669"/>
    <property type="project" value="UniProtKB-EC"/>
</dbReference>
<dbReference type="GO" id="GO:0065002">
    <property type="term" value="P:intracellular protein transmembrane transport"/>
    <property type="evidence" value="ECO:0007669"/>
    <property type="project" value="UniProtKB-UniRule"/>
</dbReference>
<dbReference type="GO" id="GO:0017038">
    <property type="term" value="P:protein import"/>
    <property type="evidence" value="ECO:0007669"/>
    <property type="project" value="InterPro"/>
</dbReference>
<dbReference type="GO" id="GO:0006605">
    <property type="term" value="P:protein targeting"/>
    <property type="evidence" value="ECO:0007669"/>
    <property type="project" value="UniProtKB-UniRule"/>
</dbReference>
<dbReference type="GO" id="GO:0043952">
    <property type="term" value="P:protein transport by the Sec complex"/>
    <property type="evidence" value="ECO:0007669"/>
    <property type="project" value="TreeGrafter"/>
</dbReference>
<dbReference type="CDD" id="cd17928">
    <property type="entry name" value="DEXDc_SecA"/>
    <property type="match status" value="1"/>
</dbReference>
<dbReference type="CDD" id="cd18803">
    <property type="entry name" value="SF2_C_secA"/>
    <property type="match status" value="1"/>
</dbReference>
<dbReference type="FunFam" id="3.40.50.300:FF:000113">
    <property type="entry name" value="Preprotein translocase subunit SecA"/>
    <property type="match status" value="1"/>
</dbReference>
<dbReference type="FunFam" id="3.90.1440.10:FF:000001">
    <property type="entry name" value="Preprotein translocase subunit SecA"/>
    <property type="match status" value="1"/>
</dbReference>
<dbReference type="Gene3D" id="1.10.3060.10">
    <property type="entry name" value="Helical scaffold and wing domains of SecA"/>
    <property type="match status" value="1"/>
</dbReference>
<dbReference type="Gene3D" id="3.40.50.300">
    <property type="entry name" value="P-loop containing nucleotide triphosphate hydrolases"/>
    <property type="match status" value="2"/>
</dbReference>
<dbReference type="Gene3D" id="3.90.1440.10">
    <property type="entry name" value="SecA, preprotein cross-linking domain"/>
    <property type="match status" value="1"/>
</dbReference>
<dbReference type="HAMAP" id="MF_01382">
    <property type="entry name" value="SecA"/>
    <property type="match status" value="1"/>
</dbReference>
<dbReference type="InterPro" id="IPR014001">
    <property type="entry name" value="Helicase_ATP-bd"/>
</dbReference>
<dbReference type="InterPro" id="IPR001650">
    <property type="entry name" value="Helicase_C-like"/>
</dbReference>
<dbReference type="InterPro" id="IPR027417">
    <property type="entry name" value="P-loop_NTPase"/>
</dbReference>
<dbReference type="InterPro" id="IPR004027">
    <property type="entry name" value="SEC_C_motif"/>
</dbReference>
<dbReference type="InterPro" id="IPR000185">
    <property type="entry name" value="SecA"/>
</dbReference>
<dbReference type="InterPro" id="IPR020937">
    <property type="entry name" value="SecA_CS"/>
</dbReference>
<dbReference type="InterPro" id="IPR011115">
    <property type="entry name" value="SecA_DEAD"/>
</dbReference>
<dbReference type="InterPro" id="IPR014018">
    <property type="entry name" value="SecA_motor_DEAD"/>
</dbReference>
<dbReference type="InterPro" id="IPR011130">
    <property type="entry name" value="SecA_preprotein_X-link_dom"/>
</dbReference>
<dbReference type="InterPro" id="IPR044722">
    <property type="entry name" value="SecA_SF2_C"/>
</dbReference>
<dbReference type="InterPro" id="IPR011116">
    <property type="entry name" value="SecA_Wing/Scaffold"/>
</dbReference>
<dbReference type="InterPro" id="IPR036266">
    <property type="entry name" value="SecA_Wing/Scaffold_sf"/>
</dbReference>
<dbReference type="InterPro" id="IPR036670">
    <property type="entry name" value="SecA_X-link_sf"/>
</dbReference>
<dbReference type="NCBIfam" id="NF009538">
    <property type="entry name" value="PRK12904.1"/>
    <property type="match status" value="1"/>
</dbReference>
<dbReference type="NCBIfam" id="TIGR00963">
    <property type="entry name" value="secA"/>
    <property type="match status" value="1"/>
</dbReference>
<dbReference type="PANTHER" id="PTHR30612:SF0">
    <property type="entry name" value="CHLOROPLAST PROTEIN-TRANSPORTING ATPASE"/>
    <property type="match status" value="1"/>
</dbReference>
<dbReference type="PANTHER" id="PTHR30612">
    <property type="entry name" value="SECA INNER MEMBRANE COMPONENT OF SEC PROTEIN SECRETION SYSTEM"/>
    <property type="match status" value="1"/>
</dbReference>
<dbReference type="Pfam" id="PF21090">
    <property type="entry name" value="P-loop_SecA"/>
    <property type="match status" value="1"/>
</dbReference>
<dbReference type="Pfam" id="PF02810">
    <property type="entry name" value="SEC-C"/>
    <property type="match status" value="1"/>
</dbReference>
<dbReference type="Pfam" id="PF07517">
    <property type="entry name" value="SecA_DEAD"/>
    <property type="match status" value="1"/>
</dbReference>
<dbReference type="Pfam" id="PF01043">
    <property type="entry name" value="SecA_PP_bind"/>
    <property type="match status" value="1"/>
</dbReference>
<dbReference type="Pfam" id="PF07516">
    <property type="entry name" value="SecA_SW"/>
    <property type="match status" value="1"/>
</dbReference>
<dbReference type="PRINTS" id="PR00906">
    <property type="entry name" value="SECA"/>
</dbReference>
<dbReference type="SMART" id="SM00957">
    <property type="entry name" value="SecA_DEAD"/>
    <property type="match status" value="1"/>
</dbReference>
<dbReference type="SMART" id="SM00958">
    <property type="entry name" value="SecA_PP_bind"/>
    <property type="match status" value="1"/>
</dbReference>
<dbReference type="SUPFAM" id="SSF81886">
    <property type="entry name" value="Helical scaffold and wing domains of SecA"/>
    <property type="match status" value="1"/>
</dbReference>
<dbReference type="SUPFAM" id="SSF52540">
    <property type="entry name" value="P-loop containing nucleoside triphosphate hydrolases"/>
    <property type="match status" value="2"/>
</dbReference>
<dbReference type="SUPFAM" id="SSF81767">
    <property type="entry name" value="Pre-protein crosslinking domain of SecA"/>
    <property type="match status" value="1"/>
</dbReference>
<dbReference type="PROSITE" id="PS01312">
    <property type="entry name" value="SECA"/>
    <property type="match status" value="1"/>
</dbReference>
<dbReference type="PROSITE" id="PS51196">
    <property type="entry name" value="SECA_MOTOR_DEAD"/>
    <property type="match status" value="1"/>
</dbReference>
<reference key="1">
    <citation type="journal article" date="2005" name="Proc. Natl. Acad. Sci. U.S.A.">
        <title>Complete genome sequencing of Anaplasma marginale reveals that the surface is skewed to two superfamilies of outer membrane proteins.</title>
        <authorList>
            <person name="Brayton K.A."/>
            <person name="Kappmeyer L.S."/>
            <person name="Herndon D.R."/>
            <person name="Dark M.J."/>
            <person name="Tibbals D.L."/>
            <person name="Palmer G.H."/>
            <person name="McGuire T.C."/>
            <person name="Knowles D.P. Jr."/>
        </authorList>
    </citation>
    <scope>NUCLEOTIDE SEQUENCE [LARGE SCALE GENOMIC DNA]</scope>
    <source>
        <strain>St. Maries</strain>
    </source>
</reference>
<name>SECA_ANAMM</name>
<keyword id="KW-0067">ATP-binding</keyword>
<keyword id="KW-0997">Cell inner membrane</keyword>
<keyword id="KW-1003">Cell membrane</keyword>
<keyword id="KW-0963">Cytoplasm</keyword>
<keyword id="KW-0472">Membrane</keyword>
<keyword id="KW-0479">Metal-binding</keyword>
<keyword id="KW-0547">Nucleotide-binding</keyword>
<keyword id="KW-0653">Protein transport</keyword>
<keyword id="KW-1278">Translocase</keyword>
<keyword id="KW-0811">Translocation</keyword>
<keyword id="KW-0813">Transport</keyword>
<keyword id="KW-0862">Zinc</keyword>
<feature type="chain" id="PRO_0000320724" description="Protein translocase subunit SecA">
    <location>
        <begin position="1"/>
        <end position="872"/>
    </location>
</feature>
<feature type="binding site" evidence="1">
    <location>
        <position position="87"/>
    </location>
    <ligand>
        <name>ATP</name>
        <dbReference type="ChEBI" id="CHEBI:30616"/>
    </ligand>
</feature>
<feature type="binding site" evidence="1">
    <location>
        <begin position="105"/>
        <end position="109"/>
    </location>
    <ligand>
        <name>ATP</name>
        <dbReference type="ChEBI" id="CHEBI:30616"/>
    </ligand>
</feature>
<feature type="binding site" evidence="1">
    <location>
        <position position="500"/>
    </location>
    <ligand>
        <name>ATP</name>
        <dbReference type="ChEBI" id="CHEBI:30616"/>
    </ligand>
</feature>
<feature type="binding site" evidence="1">
    <location>
        <position position="855"/>
    </location>
    <ligand>
        <name>Zn(2+)</name>
        <dbReference type="ChEBI" id="CHEBI:29105"/>
    </ligand>
</feature>
<feature type="binding site" evidence="1">
    <location>
        <position position="857"/>
    </location>
    <ligand>
        <name>Zn(2+)</name>
        <dbReference type="ChEBI" id="CHEBI:29105"/>
    </ligand>
</feature>
<feature type="binding site" evidence="1">
    <location>
        <position position="866"/>
    </location>
    <ligand>
        <name>Zn(2+)</name>
        <dbReference type="ChEBI" id="CHEBI:29105"/>
    </ligand>
</feature>
<feature type="binding site" evidence="1">
    <location>
        <position position="867"/>
    </location>
    <ligand>
        <name>Zn(2+)</name>
        <dbReference type="ChEBI" id="CHEBI:29105"/>
    </ligand>
</feature>
<proteinExistence type="inferred from homology"/>
<sequence length="872" mass="98312">MLSMAKRVFWPYGYGSGRASFHKIVKNINAMEEGLSALSDSELFSKTSHFKELLASGQTLDDLLVPAFAVVRETARRVLNMRHFDVQLIGGIALHRCMIAEMKTGEGKTLVATLAAYLGALEGAGVHVVTVNDYLARRDSEWMGNIYQALGMSVGCITGSSSDEQRKAAYACDVLYSTNNELGFDYLRDNMKFGRESMVQRGFNYAIVDEVDSILIDEARTPLIISGPVERDSALYGRVDSLVRALTPEDYEVEEKNRSAFLTEEGAVKVEKMLLSMGLIPVGSSLYDTENIVMMHYVSQALRAHKLFAVDKDYIVKNGNVVIIDEFTGRMMEGRRYSDGLHQALEAKERLTVNSENQTLASTTFQNYFRMYRRISGMTGTAATEADEFLGTYNLQAMQIPTNVPVRRVDMDDDVYCTEEEKFEAVIDFIVECNKRLQPTLVGTISIEKSELLSEMLTKRGIKHSVLNARYHEKEAYIIAQAGRPGAVTIATNMAGRGTDIQLGGNPEMLAKDELSGITSDEERSAKYEQLVAQTKRDRDVVVAAGGLCIVGTERHESRRIDNQLRGRSGRQGDPGLSKFFLSLEDDLLRIFGSDKVKGMLKKLGMKRGEAIQHKWISKAIERAQKKVEARNYDIRKSLLRFDDVINEQRQVVFEQRNQVLDNDTYDFAFMYHSVNQDLVSRVVKDKYYDPSPETCEPLLSEVKRIYGVELEPEKLQNLETKEQVVGYLDSFAQELLEKKAAEFVHNGENLWDFAARRVLITSLDHMWIEHLSALDSLKCGINLRSIGQKDPLNEFKIEAFTMLKHMLLKFHEMVIQKLSSMRLERDASPATQHMFRAARGGDSPFSGISRNEKCPCGSGKKFKHCHGILQL</sequence>
<comment type="function">
    <text evidence="1">Part of the Sec protein translocase complex. Interacts with the SecYEG preprotein conducting channel. Has a central role in coupling the hydrolysis of ATP to the transfer of proteins into and across the cell membrane, serving both as a receptor for the preprotein-SecB complex and as an ATP-driven molecular motor driving the stepwise translocation of polypeptide chains across the membrane.</text>
</comment>
<comment type="catalytic activity">
    <reaction evidence="1">
        <text>ATP + H2O + cellular proteinSide 1 = ADP + phosphate + cellular proteinSide 2.</text>
        <dbReference type="EC" id="7.4.2.8"/>
    </reaction>
</comment>
<comment type="cofactor">
    <cofactor evidence="1">
        <name>Zn(2+)</name>
        <dbReference type="ChEBI" id="CHEBI:29105"/>
    </cofactor>
    <text evidence="1">May bind 1 zinc ion per subunit.</text>
</comment>
<comment type="subunit">
    <text evidence="1">Monomer and homodimer. Part of the essential Sec protein translocation apparatus which comprises SecA, SecYEG and auxiliary proteins SecDF-YajC and YidC.</text>
</comment>
<comment type="subcellular location">
    <subcellularLocation>
        <location evidence="1">Cell inner membrane</location>
        <topology evidence="1">Peripheral membrane protein</topology>
        <orientation evidence="1">Cytoplasmic side</orientation>
    </subcellularLocation>
    <subcellularLocation>
        <location evidence="1">Cytoplasm</location>
    </subcellularLocation>
    <text evidence="1">Distribution is 50-50.</text>
</comment>
<comment type="similarity">
    <text evidence="1">Belongs to the SecA family.</text>
</comment>
<comment type="sequence caution" evidence="2">
    <conflict type="erroneous initiation">
        <sequence resource="EMBL-CDS" id="AAV86971"/>
    </conflict>
    <text>Extended N-terminus.</text>
</comment>
<organism>
    <name type="scientific">Anaplasma marginale (strain St. Maries)</name>
    <dbReference type="NCBI Taxonomy" id="234826"/>
    <lineage>
        <taxon>Bacteria</taxon>
        <taxon>Pseudomonadati</taxon>
        <taxon>Pseudomonadota</taxon>
        <taxon>Alphaproteobacteria</taxon>
        <taxon>Rickettsiales</taxon>
        <taxon>Anaplasmataceae</taxon>
        <taxon>Anaplasma</taxon>
    </lineage>
</organism>
<evidence type="ECO:0000255" key="1">
    <source>
        <dbReference type="HAMAP-Rule" id="MF_01382"/>
    </source>
</evidence>
<evidence type="ECO:0000305" key="2"/>
<gene>
    <name evidence="1" type="primary">secA</name>
    <name type="ordered locus">AM1120</name>
</gene>
<protein>
    <recommendedName>
        <fullName evidence="1">Protein translocase subunit SecA</fullName>
        <ecNumber evidence="1">7.4.2.8</ecNumber>
    </recommendedName>
</protein>
<accession>Q5P9Q9</accession>